<organism>
    <name type="scientific">Mycobacterium tuberculosis (strain ATCC 25618 / H37Rv)</name>
    <dbReference type="NCBI Taxonomy" id="83332"/>
    <lineage>
        <taxon>Bacteria</taxon>
        <taxon>Bacillati</taxon>
        <taxon>Actinomycetota</taxon>
        <taxon>Actinomycetes</taxon>
        <taxon>Mycobacteriales</taxon>
        <taxon>Mycobacteriaceae</taxon>
        <taxon>Mycobacterium</taxon>
        <taxon>Mycobacterium tuberculosis complex</taxon>
    </lineage>
</organism>
<name>TRUB_MYCTU</name>
<gene>
    <name evidence="1" type="primary">truB</name>
    <name type="ordered locus">Rv2793c</name>
    <name type="ORF">MTV002.58c</name>
</gene>
<reference key="1">
    <citation type="journal article" date="1998" name="Nature">
        <title>Deciphering the biology of Mycobacterium tuberculosis from the complete genome sequence.</title>
        <authorList>
            <person name="Cole S.T."/>
            <person name="Brosch R."/>
            <person name="Parkhill J."/>
            <person name="Garnier T."/>
            <person name="Churcher C.M."/>
            <person name="Harris D.E."/>
            <person name="Gordon S.V."/>
            <person name="Eiglmeier K."/>
            <person name="Gas S."/>
            <person name="Barry C.E. III"/>
            <person name="Tekaia F."/>
            <person name="Badcock K."/>
            <person name="Basham D."/>
            <person name="Brown D."/>
            <person name="Chillingworth T."/>
            <person name="Connor R."/>
            <person name="Davies R.M."/>
            <person name="Devlin K."/>
            <person name="Feltwell T."/>
            <person name="Gentles S."/>
            <person name="Hamlin N."/>
            <person name="Holroyd S."/>
            <person name="Hornsby T."/>
            <person name="Jagels K."/>
            <person name="Krogh A."/>
            <person name="McLean J."/>
            <person name="Moule S."/>
            <person name="Murphy L.D."/>
            <person name="Oliver S."/>
            <person name="Osborne J."/>
            <person name="Quail M.A."/>
            <person name="Rajandream M.A."/>
            <person name="Rogers J."/>
            <person name="Rutter S."/>
            <person name="Seeger K."/>
            <person name="Skelton S."/>
            <person name="Squares S."/>
            <person name="Squares R."/>
            <person name="Sulston J.E."/>
            <person name="Taylor K."/>
            <person name="Whitehead S."/>
            <person name="Barrell B.G."/>
        </authorList>
    </citation>
    <scope>NUCLEOTIDE SEQUENCE [LARGE SCALE GENOMIC DNA]</scope>
    <source>
        <strain>ATCC 25618 / H37Rv</strain>
    </source>
</reference>
<reference key="2">
    <citation type="journal article" date="2011" name="Mol. Cell. Proteomics">
        <title>Proteogenomic analysis of Mycobacterium tuberculosis by high resolution mass spectrometry.</title>
        <authorList>
            <person name="Kelkar D.S."/>
            <person name="Kumar D."/>
            <person name="Kumar P."/>
            <person name="Balakrishnan L."/>
            <person name="Muthusamy B."/>
            <person name="Yadav A.K."/>
            <person name="Shrivastava P."/>
            <person name="Marimuthu A."/>
            <person name="Anand S."/>
            <person name="Sundaram H."/>
            <person name="Kingsbury R."/>
            <person name="Harsha H.C."/>
            <person name="Nair B."/>
            <person name="Prasad T.S."/>
            <person name="Chauhan D.S."/>
            <person name="Katoch K."/>
            <person name="Katoch V.M."/>
            <person name="Kumar P."/>
            <person name="Chaerkady R."/>
            <person name="Ramachandran S."/>
            <person name="Dash D."/>
            <person name="Pandey A."/>
        </authorList>
    </citation>
    <scope>IDENTIFICATION BY MASS SPECTROMETRY [LARGE SCALE ANALYSIS]</scope>
    <source>
        <strain>ATCC 25618 / H37Rv</strain>
    </source>
</reference>
<reference key="3">
    <citation type="journal article" date="2004" name="J. Biol. Chem.">
        <title>Crystal structure of the apo forms of psi 55 tRNA pseudouridine synthase from Mycobacterium tuberculosis: a hinge at the base of the catalytic cleft.</title>
        <authorList>
            <person name="Chaudhuri B.N."/>
            <person name="Chan S."/>
            <person name="Perry L.J."/>
            <person name="Yeates T.O."/>
        </authorList>
    </citation>
    <scope>X-RAY CRYSTALLOGRAPHY (1.9 ANGSTROMS)</scope>
    <source>
        <strain>ATCC 25618 / H37Rv</strain>
    </source>
</reference>
<proteinExistence type="evidence at protein level"/>
<sequence>MSATGPGIVVIDKPAGMTSHDVVGRCRRIFATRRVGHAGTLDPMATGVLVIGIERATKILGLLTAAPKSYAATIRLGQTTSTEDAEGQVLQSVPAKHLTIEAIDAAMERLRGEIRQVPSSVSAIKVGGRRAYRLARQGRSVQLEARPIRIDRFELLAARRRDQLIDIDVEIDCSSGTYIRALARDLGDALGVGGHVTALRRTRVGRFELDQARSLDDLAERPALSLSLDEACLLMFARRDLTAAEASAAANGRSLPAVGIDGVYAACDADGRVIALLRDEGSRTRSVAVLRPATMHPG</sequence>
<accession>P9WHP7</accession>
<accession>L0TDK3</accession>
<accession>O33335</accession>
<accession>P62190</accession>
<dbReference type="EC" id="5.4.99.25" evidence="1"/>
<dbReference type="EMBL" id="AL123456">
    <property type="protein sequence ID" value="CCP45592.1"/>
    <property type="molecule type" value="Genomic_DNA"/>
</dbReference>
<dbReference type="PIR" id="H70884">
    <property type="entry name" value="H70884"/>
</dbReference>
<dbReference type="RefSeq" id="NP_217309.1">
    <property type="nucleotide sequence ID" value="NC_000962.3"/>
</dbReference>
<dbReference type="RefSeq" id="WP_003414147.1">
    <property type="nucleotide sequence ID" value="NZ_NVQJ01000020.1"/>
</dbReference>
<dbReference type="PDB" id="1SGV">
    <property type="method" value="X-ray"/>
    <property type="resolution" value="1.90 A"/>
    <property type="chains" value="A/B=1-298"/>
</dbReference>
<dbReference type="PDBsum" id="1SGV"/>
<dbReference type="SMR" id="P9WHP7"/>
<dbReference type="FunCoup" id="P9WHP7">
    <property type="interactions" value="225"/>
</dbReference>
<dbReference type="STRING" id="83332.Rv2793c"/>
<dbReference type="PaxDb" id="83332-Rv2793c"/>
<dbReference type="DNASU" id="888587"/>
<dbReference type="GeneID" id="888587"/>
<dbReference type="KEGG" id="mtu:Rv2793c"/>
<dbReference type="KEGG" id="mtv:RVBD_2793c"/>
<dbReference type="TubercuList" id="Rv2793c"/>
<dbReference type="eggNOG" id="COG0130">
    <property type="taxonomic scope" value="Bacteria"/>
</dbReference>
<dbReference type="InParanoid" id="P9WHP7"/>
<dbReference type="OrthoDB" id="9802309at2"/>
<dbReference type="PhylomeDB" id="P9WHP7"/>
<dbReference type="BRENDA" id="5.4.99.25">
    <property type="organism ID" value="3445"/>
</dbReference>
<dbReference type="EvolutionaryTrace" id="P9WHP7"/>
<dbReference type="Proteomes" id="UP000001584">
    <property type="component" value="Chromosome"/>
</dbReference>
<dbReference type="GO" id="GO:0009274">
    <property type="term" value="C:peptidoglycan-based cell wall"/>
    <property type="evidence" value="ECO:0007005"/>
    <property type="project" value="MTBBASE"/>
</dbReference>
<dbReference type="GO" id="GO:0009982">
    <property type="term" value="F:pseudouridine synthase activity"/>
    <property type="evidence" value="ECO:0000318"/>
    <property type="project" value="GO_Central"/>
</dbReference>
<dbReference type="GO" id="GO:0003723">
    <property type="term" value="F:RNA binding"/>
    <property type="evidence" value="ECO:0007669"/>
    <property type="project" value="InterPro"/>
</dbReference>
<dbReference type="GO" id="GO:0160148">
    <property type="term" value="F:tRNA pseudouridine(55) synthase activity"/>
    <property type="evidence" value="ECO:0007669"/>
    <property type="project" value="UniProtKB-EC"/>
</dbReference>
<dbReference type="GO" id="GO:1990481">
    <property type="term" value="P:mRNA pseudouridine synthesis"/>
    <property type="evidence" value="ECO:0000318"/>
    <property type="project" value="GO_Central"/>
</dbReference>
<dbReference type="GO" id="GO:0006400">
    <property type="term" value="P:tRNA modification"/>
    <property type="evidence" value="ECO:0000318"/>
    <property type="project" value="GO_Central"/>
</dbReference>
<dbReference type="GO" id="GO:0031119">
    <property type="term" value="P:tRNA pseudouridine synthesis"/>
    <property type="evidence" value="ECO:0007669"/>
    <property type="project" value="UniProtKB-UniRule"/>
</dbReference>
<dbReference type="CDD" id="cd02573">
    <property type="entry name" value="PseudoU_synth_EcTruB"/>
    <property type="match status" value="1"/>
</dbReference>
<dbReference type="FunFam" id="3.30.2350.10:FF:000011">
    <property type="entry name" value="tRNA pseudouridine synthase B"/>
    <property type="match status" value="1"/>
</dbReference>
<dbReference type="Gene3D" id="3.30.2350.10">
    <property type="entry name" value="Pseudouridine synthase"/>
    <property type="match status" value="1"/>
</dbReference>
<dbReference type="Gene3D" id="2.30.130.10">
    <property type="entry name" value="PUA domain"/>
    <property type="match status" value="1"/>
</dbReference>
<dbReference type="HAMAP" id="MF_01080">
    <property type="entry name" value="TruB_bact"/>
    <property type="match status" value="1"/>
</dbReference>
<dbReference type="InterPro" id="IPR020103">
    <property type="entry name" value="PsdUridine_synth_cat_dom_sf"/>
</dbReference>
<dbReference type="InterPro" id="IPR002501">
    <property type="entry name" value="PsdUridine_synth_N"/>
</dbReference>
<dbReference type="InterPro" id="IPR015947">
    <property type="entry name" value="PUA-like_sf"/>
</dbReference>
<dbReference type="InterPro" id="IPR036974">
    <property type="entry name" value="PUA_sf"/>
</dbReference>
<dbReference type="InterPro" id="IPR015225">
    <property type="entry name" value="tRNA_psdUridine_synth_fam2_C"/>
</dbReference>
<dbReference type="InterPro" id="IPR014780">
    <property type="entry name" value="tRNA_psdUridine_synth_TruB"/>
</dbReference>
<dbReference type="InterPro" id="IPR032819">
    <property type="entry name" value="TruB_C"/>
</dbReference>
<dbReference type="NCBIfam" id="TIGR00431">
    <property type="entry name" value="TruB"/>
    <property type="match status" value="1"/>
</dbReference>
<dbReference type="PANTHER" id="PTHR13767:SF2">
    <property type="entry name" value="PSEUDOURIDYLATE SYNTHASE TRUB1"/>
    <property type="match status" value="1"/>
</dbReference>
<dbReference type="PANTHER" id="PTHR13767">
    <property type="entry name" value="TRNA-PSEUDOURIDINE SYNTHASE"/>
    <property type="match status" value="1"/>
</dbReference>
<dbReference type="Pfam" id="PF09142">
    <property type="entry name" value="TruB_C"/>
    <property type="match status" value="1"/>
</dbReference>
<dbReference type="Pfam" id="PF16198">
    <property type="entry name" value="TruB_C_2"/>
    <property type="match status" value="1"/>
</dbReference>
<dbReference type="Pfam" id="PF01509">
    <property type="entry name" value="TruB_N"/>
    <property type="match status" value="1"/>
</dbReference>
<dbReference type="SUPFAM" id="SSF55120">
    <property type="entry name" value="Pseudouridine synthase"/>
    <property type="match status" value="1"/>
</dbReference>
<dbReference type="SUPFAM" id="SSF88697">
    <property type="entry name" value="PUA domain-like"/>
    <property type="match status" value="1"/>
</dbReference>
<evidence type="ECO:0000255" key="1">
    <source>
        <dbReference type="HAMAP-Rule" id="MF_01080"/>
    </source>
</evidence>
<evidence type="ECO:0007829" key="2">
    <source>
        <dbReference type="PDB" id="1SGV"/>
    </source>
</evidence>
<keyword id="KW-0002">3D-structure</keyword>
<keyword id="KW-0413">Isomerase</keyword>
<keyword id="KW-1185">Reference proteome</keyword>
<keyword id="KW-0819">tRNA processing</keyword>
<protein>
    <recommendedName>
        <fullName evidence="1">tRNA pseudouridine synthase B</fullName>
        <ecNumber evidence="1">5.4.99.25</ecNumber>
    </recommendedName>
    <alternativeName>
        <fullName>MTB-TRUB</fullName>
    </alternativeName>
    <alternativeName>
        <fullName evidence="1">tRNA pseudouridine(55) synthase</fullName>
        <shortName evidence="1">Psi55 synthase</shortName>
    </alternativeName>
    <alternativeName>
        <fullName evidence="1">tRNA pseudouridylate synthase</fullName>
    </alternativeName>
    <alternativeName>
        <fullName evidence="1">tRNA-uridine isomerase</fullName>
    </alternativeName>
</protein>
<comment type="function">
    <text evidence="1">Responsible for synthesis of pseudouridine from uracil-55 in the psi GC loop of transfer RNAs.</text>
</comment>
<comment type="catalytic activity">
    <reaction evidence="1">
        <text>uridine(55) in tRNA = pseudouridine(55) in tRNA</text>
        <dbReference type="Rhea" id="RHEA:42532"/>
        <dbReference type="Rhea" id="RHEA-COMP:10101"/>
        <dbReference type="Rhea" id="RHEA-COMP:10102"/>
        <dbReference type="ChEBI" id="CHEBI:65314"/>
        <dbReference type="ChEBI" id="CHEBI:65315"/>
        <dbReference type="EC" id="5.4.99.25"/>
    </reaction>
</comment>
<comment type="similarity">
    <text evidence="1">Belongs to the pseudouridine synthase TruB family. Type 1 subfamily.</text>
</comment>
<feature type="chain" id="PRO_0000121872" description="tRNA pseudouridine synthase B">
    <location>
        <begin position="1"/>
        <end position="298"/>
    </location>
</feature>
<feature type="active site" description="Nucleophile" evidence="1">
    <location>
        <position position="42"/>
    </location>
</feature>
<feature type="strand" evidence="2">
    <location>
        <begin position="6"/>
        <end position="13"/>
    </location>
</feature>
<feature type="helix" evidence="2">
    <location>
        <begin position="19"/>
        <end position="29"/>
    </location>
</feature>
<feature type="strand" evidence="2">
    <location>
        <begin position="35"/>
        <end position="39"/>
    </location>
</feature>
<feature type="strand" evidence="2">
    <location>
        <begin position="46"/>
        <end position="53"/>
    </location>
</feature>
<feature type="helix" evidence="2">
    <location>
        <begin position="54"/>
        <end position="62"/>
    </location>
</feature>
<feature type="turn" evidence="2">
    <location>
        <begin position="63"/>
        <end position="65"/>
    </location>
</feature>
<feature type="strand" evidence="2">
    <location>
        <begin position="68"/>
        <end position="76"/>
    </location>
</feature>
<feature type="strand" evidence="2">
    <location>
        <begin position="78"/>
        <end position="80"/>
    </location>
</feature>
<feature type="strand" evidence="2">
    <location>
        <begin position="89"/>
        <end position="92"/>
    </location>
</feature>
<feature type="helix" evidence="2">
    <location>
        <begin position="100"/>
        <end position="109"/>
    </location>
</feature>
<feature type="strand" evidence="2">
    <location>
        <begin position="112"/>
        <end position="114"/>
    </location>
</feature>
<feature type="strand" evidence="2">
    <location>
        <begin position="148"/>
        <end position="161"/>
    </location>
</feature>
<feature type="strand" evidence="2">
    <location>
        <begin position="164"/>
        <end position="174"/>
    </location>
</feature>
<feature type="helix" evidence="2">
    <location>
        <begin position="179"/>
        <end position="189"/>
    </location>
</feature>
<feature type="strand" evidence="2">
    <location>
        <begin position="194"/>
        <end position="204"/>
    </location>
</feature>
<feature type="helix" evidence="2">
    <location>
        <begin position="209"/>
        <end position="211"/>
    </location>
</feature>
<feature type="helix" evidence="2">
    <location>
        <begin position="215"/>
        <end position="220"/>
    </location>
</feature>
<feature type="strand" evidence="2">
    <location>
        <begin position="225"/>
        <end position="227"/>
    </location>
</feature>
<feature type="helix" evidence="2">
    <location>
        <begin position="228"/>
        <end position="235"/>
    </location>
</feature>
<feature type="strand" evidence="2">
    <location>
        <begin position="236"/>
        <end position="240"/>
    </location>
</feature>
<feature type="helix" evidence="2">
    <location>
        <begin position="243"/>
        <end position="250"/>
    </location>
</feature>
<feature type="strand" evidence="2">
    <location>
        <begin position="264"/>
        <end position="267"/>
    </location>
</feature>
<feature type="strand" evidence="2">
    <location>
        <begin position="273"/>
        <end position="280"/>
    </location>
</feature>
<feature type="strand" evidence="2">
    <location>
        <begin position="283"/>
        <end position="290"/>
    </location>
</feature>